<organism>
    <name type="scientific">Lycosa singoriensis</name>
    <name type="common">Wolf spider</name>
    <name type="synonym">Aranea singoriensis</name>
    <dbReference type="NCBI Taxonomy" id="434756"/>
    <lineage>
        <taxon>Eukaryota</taxon>
        <taxon>Metazoa</taxon>
        <taxon>Ecdysozoa</taxon>
        <taxon>Arthropoda</taxon>
        <taxon>Chelicerata</taxon>
        <taxon>Arachnida</taxon>
        <taxon>Araneae</taxon>
        <taxon>Araneomorphae</taxon>
        <taxon>Entelegynae</taxon>
        <taxon>Lycosoidea</taxon>
        <taxon>Lycosidae</taxon>
        <taxon>Lycosa</taxon>
    </lineage>
</organism>
<dbReference type="EMBL" id="EU925995">
    <property type="protein sequence ID" value="ACI41327.1"/>
    <property type="molecule type" value="mRNA"/>
</dbReference>
<dbReference type="EMBL" id="FM863999">
    <property type="protein sequence ID" value="CAS03597.1"/>
    <property type="molecule type" value="mRNA"/>
</dbReference>
<dbReference type="SMR" id="B6DCR1"/>
<dbReference type="ArachnoServer" id="AS000944">
    <property type="toxin name" value="U3-lycotoxin-Ls1e"/>
</dbReference>
<dbReference type="GO" id="GO:0005576">
    <property type="term" value="C:extracellular region"/>
    <property type="evidence" value="ECO:0007669"/>
    <property type="project" value="UniProtKB-SubCell"/>
</dbReference>
<dbReference type="GO" id="GO:0090729">
    <property type="term" value="F:toxin activity"/>
    <property type="evidence" value="ECO:0007669"/>
    <property type="project" value="UniProtKB-KW"/>
</dbReference>
<dbReference type="InterPro" id="IPR019553">
    <property type="entry name" value="Spider_toxin_CSTX_knottin"/>
</dbReference>
<dbReference type="InterPro" id="IPR011142">
    <property type="entry name" value="Spider_toxin_CSTX_Knottin_CS"/>
</dbReference>
<dbReference type="Pfam" id="PF10530">
    <property type="entry name" value="Toxin_35"/>
    <property type="match status" value="1"/>
</dbReference>
<dbReference type="PROSITE" id="PS60029">
    <property type="entry name" value="SPIDER_CSTX"/>
    <property type="match status" value="1"/>
</dbReference>
<proteinExistence type="evidence at transcript level"/>
<name>TX316_LYCSI</name>
<keyword id="KW-1015">Disulfide bond</keyword>
<keyword id="KW-0960">Knottin</keyword>
<keyword id="KW-0964">Secreted</keyword>
<keyword id="KW-0732">Signal</keyword>
<keyword id="KW-0800">Toxin</keyword>
<feature type="signal peptide" evidence="2">
    <location>
        <begin position="1"/>
        <end position="20"/>
    </location>
</feature>
<feature type="propeptide" id="PRO_0000401637" evidence="1">
    <location>
        <begin position="21"/>
        <end position="44"/>
    </location>
</feature>
<feature type="chain" id="PRO_0000401638" description="U3-lycotoxin-Ls1e">
    <location>
        <begin position="45"/>
        <end position="115"/>
    </location>
</feature>
<feature type="disulfide bond" evidence="1">
    <location>
        <begin position="48"/>
        <end position="63"/>
    </location>
</feature>
<feature type="disulfide bond" evidence="1">
    <location>
        <begin position="55"/>
        <end position="72"/>
    </location>
</feature>
<feature type="disulfide bond" evidence="1">
    <location>
        <begin position="62"/>
        <end position="87"/>
    </location>
</feature>
<feature type="disulfide bond" evidence="1">
    <location>
        <begin position="74"/>
        <end position="85"/>
    </location>
</feature>
<accession>B6DCR1</accession>
<comment type="subcellular location">
    <subcellularLocation>
        <location evidence="1">Secreted</location>
    </subcellularLocation>
</comment>
<comment type="tissue specificity">
    <text>Expressed by the venom gland.</text>
</comment>
<comment type="domain">
    <text evidence="1">The presence of a 'disulfide through disulfide knot' structurally defines this protein as a knottin.</text>
</comment>
<comment type="similarity">
    <text evidence="3">Belongs to the neurotoxin 19 (CSTX) family. 01 subfamily.</text>
</comment>
<protein>
    <recommendedName>
        <fullName>U3-lycotoxin-Ls1e</fullName>
    </recommendedName>
    <alternativeName>
        <fullName>Toxin-like structure LSTX-B16</fullName>
    </alternativeName>
</protein>
<evidence type="ECO:0000250" key="1"/>
<evidence type="ECO:0000255" key="2"/>
<evidence type="ECO:0000305" key="3"/>
<sequence>MKFVLLFGVLSLTLFSYSSAEMLDDFDQADEDELLSLIEKEEARAKECTPRFYDCSHDRHSCCRSELFKDVCTCFYPEGGDNEVCTCQQPKHLKYMEKAADKAKKFGGKIMKWFS</sequence>
<reference key="1">
    <citation type="journal article" date="2010" name="Zoology">
        <title>Transcriptome analysis of the venom glands of the Chinese wolf spider Lycosa singoriensis.</title>
        <authorList>
            <person name="Zhang Y."/>
            <person name="Chen J."/>
            <person name="Tang X."/>
            <person name="Wang F."/>
            <person name="Jiang L."/>
            <person name="Xiong X."/>
            <person name="Wang M."/>
            <person name="Rong M."/>
            <person name="Liu Z."/>
            <person name="Liang S."/>
        </authorList>
    </citation>
    <scope>NUCLEOTIDE SEQUENCE [LARGE SCALE MRNA]</scope>
    <source>
        <tissue>Venom gland</tissue>
    </source>
</reference>